<evidence type="ECO:0000250" key="1"/>
<evidence type="ECO:0000250" key="2">
    <source>
        <dbReference type="UniProtKB" id="P37352"/>
    </source>
</evidence>
<evidence type="ECO:0000305" key="3"/>
<feature type="chain" id="PRO_0000156833" description="4-hydroxyphenylacetate degradation bifunctional isomerase/decarboxylase">
    <location>
        <begin position="1"/>
        <end position="429"/>
    </location>
</feature>
<feature type="repeat" description="Approximate">
    <location>
        <begin position="1"/>
        <end position="215"/>
    </location>
</feature>
<feature type="repeat" description="Approximate">
    <location>
        <begin position="216"/>
        <end position="429"/>
    </location>
</feature>
<feature type="binding site" evidence="1">
    <location>
        <position position="276"/>
    </location>
    <ligand>
        <name>a divalent metal cation</name>
        <dbReference type="ChEBI" id="CHEBI:60240"/>
    </ligand>
</feature>
<feature type="binding site" evidence="1">
    <location>
        <position position="278"/>
    </location>
    <ligand>
        <name>a divalent metal cation</name>
        <dbReference type="ChEBI" id="CHEBI:60240"/>
    </ligand>
</feature>
<feature type="binding site" evidence="1">
    <location>
        <position position="307"/>
    </location>
    <ligand>
        <name>a divalent metal cation</name>
        <dbReference type="ChEBI" id="CHEBI:60240"/>
    </ligand>
</feature>
<accession>Q46978</accession>
<proteinExistence type="inferred from homology"/>
<keyword id="KW-0058">Aromatic hydrocarbons catabolism</keyword>
<keyword id="KW-0413">Isomerase</keyword>
<keyword id="KW-0456">Lyase</keyword>
<keyword id="KW-0479">Metal-binding</keyword>
<keyword id="KW-0511">Multifunctional enzyme</keyword>
<keyword id="KW-0677">Repeat</keyword>
<reference key="1">
    <citation type="journal article" date="1996" name="J. Bacteriol.">
        <title>Molecular characterization of the 4-hydroxyphenylacetate catabolic pathway of Escherichia coli W: engineering a mobile aromatic degradative cluster.</title>
        <authorList>
            <person name="Prieto M.A."/>
            <person name="Diaz E."/>
            <person name="Garcia J.L."/>
        </authorList>
    </citation>
    <scope>NUCLEOTIDE SEQUENCE [GENOMIC DNA]</scope>
    <source>
        <strain>W / ATCC 11105 / DSM 1900 / 113-3</strain>
    </source>
</reference>
<sequence length="429" mass="47108">MKGTIFAVALNHRSQLDAWQEAFQQSPYKAPPKTAVWFIKPRNTVIGCGEPIPFPQGEKVLSGATVALIVGKTATKVREEDAAEYIAGYALANDVSLPEESFYRPAIKAKCRDGFCPIGETVALSNVDNLTIYTEINGRPADHWNTADLQRNAAQLLSALSEFATLNPGDAILLGTPQARVEIQPGDRVRVLAEGFPPLENPVVDEREVTTRKSFPTLPHPHGTLFALGLNYADHASELEFKPPEEPLVFLKAPNTLTGDNQTSVRPNNIEYMHYEAELVVVIGKQARNVSEADAMDYVAGYTVCNDYAIRDYLENYYRPNLRVKSRDGLTPMLSTIVPKEAIPDPHNLTLRTFVNGELRQQGTTADLIFSVPFLIAYLSEFMTLNPGDMIATGTPKGLSDVVPGDEVVVEVEGVGRLVNRIVSEETAK</sequence>
<comment type="function">
    <text evidence="2">Decarboxylates OPET (5-oxo-pent-3-ene-1,2,5-tricarboxylic acid) into HHDD (2-hydroxy-hept-2,4-diene-1,7-dioate) and isomerizes it to OHED (2-oxo-hept-3-ene-1,7-dioate).</text>
</comment>
<comment type="catalytic activity">
    <reaction evidence="2">
        <text>(2E,4Z)-5-hydroxypenta-2,4-diene-1,2,5-tricarboxylate = (3E,5R)-5-carboxy-2-oxohept-3-enedioate</text>
        <dbReference type="Rhea" id="RHEA:18813"/>
        <dbReference type="ChEBI" id="CHEBI:47961"/>
        <dbReference type="ChEBI" id="CHEBI:87491"/>
        <dbReference type="EC" id="5.3.3.10"/>
    </reaction>
</comment>
<comment type="catalytic activity">
    <reaction evidence="2">
        <text>(3E,5R)-5-carboxy-2-oxohept-3-enedioate + H(+) = (4Z)-2-oxohept-4-enedioate + CO2</text>
        <dbReference type="Rhea" id="RHEA:14397"/>
        <dbReference type="ChEBI" id="CHEBI:15378"/>
        <dbReference type="ChEBI" id="CHEBI:16526"/>
        <dbReference type="ChEBI" id="CHEBI:87491"/>
        <dbReference type="ChEBI" id="CHEBI:87507"/>
        <dbReference type="EC" id="4.1.1.68"/>
    </reaction>
</comment>
<comment type="cofactor">
    <cofactor evidence="2">
        <name>Mg(2+)</name>
        <dbReference type="ChEBI" id="CHEBI:18420"/>
    </cofactor>
</comment>
<comment type="pathway">
    <text>Aromatic compound metabolism; 4-hydroxyphenylacetate degradation; pyruvate and succinate semialdehyde from 4-hydroxyphenylacetate: step 4/7.</text>
</comment>
<comment type="pathway">
    <text>Aromatic compound metabolism; 4-hydroxyphenylacetate degradation; pyruvate and succinate semialdehyde from 4-hydroxyphenylacetate: step 5/7.</text>
</comment>
<comment type="subunit">
    <text evidence="2">Monomer.</text>
</comment>
<comment type="similarity">
    <text evidence="3">Belongs to the FAH family.</text>
</comment>
<gene>
    <name type="primary">hpaG</name>
</gene>
<dbReference type="EC" id="5.3.3.10" evidence="2"/>
<dbReference type="EC" id="4.1.1.68" evidence="2"/>
<dbReference type="EMBL" id="Z37980">
    <property type="protein sequence ID" value="CAA86040.1"/>
    <property type="molecule type" value="Genomic_DNA"/>
</dbReference>
<dbReference type="RefSeq" id="WP_000679083.1">
    <property type="nucleotide sequence ID" value="NZ_WTPV01000016.1"/>
</dbReference>
<dbReference type="SMR" id="Q46978"/>
<dbReference type="STRING" id="585034.ECIAI1_4575"/>
<dbReference type="PATRIC" id="fig|562.5049.peg.2807"/>
<dbReference type="eggNOG" id="COG0179">
    <property type="taxonomic scope" value="Bacteria"/>
</dbReference>
<dbReference type="OMA" id="VMKGTIF"/>
<dbReference type="BioCyc" id="MetaCyc:MONOMER-604"/>
<dbReference type="UniPathway" id="UPA00208">
    <property type="reaction ID" value="UER00419"/>
</dbReference>
<dbReference type="UniPathway" id="UPA00208">
    <property type="reaction ID" value="UER00420"/>
</dbReference>
<dbReference type="GO" id="GO:0008704">
    <property type="term" value="F:5-carboxymethyl-2-hydroxymuconate delta-isomerase activity"/>
    <property type="evidence" value="ECO:0007669"/>
    <property type="project" value="UniProtKB-EC"/>
</dbReference>
<dbReference type="GO" id="GO:0018800">
    <property type="term" value="F:5-oxopent-3-ene-1,2,5-tricarboxylate decarboxylase activity"/>
    <property type="evidence" value="ECO:0007669"/>
    <property type="project" value="UniProtKB-EC"/>
</dbReference>
<dbReference type="GO" id="GO:0046872">
    <property type="term" value="F:metal ion binding"/>
    <property type="evidence" value="ECO:0007669"/>
    <property type="project" value="UniProtKB-KW"/>
</dbReference>
<dbReference type="GO" id="GO:1901023">
    <property type="term" value="P:4-hydroxyphenylacetate catabolic process"/>
    <property type="evidence" value="ECO:0007669"/>
    <property type="project" value="InterPro"/>
</dbReference>
<dbReference type="FunFam" id="3.90.850.10:FF:000002">
    <property type="entry name" value="2-hydroxyhepta-2,4-diene-1,7-dioate isomerase"/>
    <property type="match status" value="1"/>
</dbReference>
<dbReference type="Gene3D" id="3.90.850.10">
    <property type="entry name" value="Fumarylacetoacetase-like, C-terminal domain"/>
    <property type="match status" value="2"/>
</dbReference>
<dbReference type="InterPro" id="IPR011234">
    <property type="entry name" value="Fumarylacetoacetase-like_C"/>
</dbReference>
<dbReference type="InterPro" id="IPR036663">
    <property type="entry name" value="Fumarylacetoacetase_C_sf"/>
</dbReference>
<dbReference type="InterPro" id="IPR012684">
    <property type="entry name" value="HPA_isomer/decarb_C"/>
</dbReference>
<dbReference type="InterPro" id="IPR012686">
    <property type="entry name" value="HPA_isomer/decarb_N"/>
</dbReference>
<dbReference type="NCBIfam" id="TIGR02303">
    <property type="entry name" value="HpaG-C-term"/>
    <property type="match status" value="1"/>
</dbReference>
<dbReference type="NCBIfam" id="TIGR02305">
    <property type="entry name" value="HpaG-N-term"/>
    <property type="match status" value="1"/>
</dbReference>
<dbReference type="NCBIfam" id="NF011750">
    <property type="entry name" value="PRK15203.1"/>
    <property type="match status" value="1"/>
</dbReference>
<dbReference type="PANTHER" id="PTHR11820:SF114">
    <property type="entry name" value="4-HYDROXYPHENYLACETATE CATABOLISM PROTEIN"/>
    <property type="match status" value="1"/>
</dbReference>
<dbReference type="PANTHER" id="PTHR11820">
    <property type="entry name" value="ACYLPYRUVASE"/>
    <property type="match status" value="1"/>
</dbReference>
<dbReference type="Pfam" id="PF01557">
    <property type="entry name" value="FAA_hydrolase"/>
    <property type="match status" value="2"/>
</dbReference>
<dbReference type="SUPFAM" id="SSF56529">
    <property type="entry name" value="FAH"/>
    <property type="match status" value="2"/>
</dbReference>
<name>HPAG_ECOLX</name>
<protein>
    <recommendedName>
        <fullName>4-hydroxyphenylacetate degradation bifunctional isomerase/decarboxylase</fullName>
    </recommendedName>
    <domain>
        <recommendedName>
            <fullName>2-hydroxyhepta-2,4-diene-1,7-dioate isomerase</fullName>
            <shortName>HHDD isomerase</shortName>
            <ecNumber evidence="2">5.3.3.10</ecNumber>
        </recommendedName>
        <alternativeName>
            <fullName>5-carboxymethyl-2-hydroxymuconate Delta-isomerase</fullName>
        </alternativeName>
    </domain>
    <domain>
        <recommendedName>
            <fullName>5-carboxymethyl-2-oxo-hex-3-ene-1,7-dioate decarboxylase</fullName>
            <ecNumber evidence="2">4.1.1.68</ecNumber>
        </recommendedName>
        <alternativeName>
            <fullName>5-oxopent-3-ene-1,2,5-tricarboxylate decarboxylase</fullName>
            <shortName>OPET decarboxylase</shortName>
        </alternativeName>
    </domain>
</protein>
<organism>
    <name type="scientific">Escherichia coli</name>
    <dbReference type="NCBI Taxonomy" id="562"/>
    <lineage>
        <taxon>Bacteria</taxon>
        <taxon>Pseudomonadati</taxon>
        <taxon>Pseudomonadota</taxon>
        <taxon>Gammaproteobacteria</taxon>
        <taxon>Enterobacterales</taxon>
        <taxon>Enterobacteriaceae</taxon>
        <taxon>Escherichia</taxon>
    </lineage>
</organism>